<evidence type="ECO:0000255" key="1">
    <source>
        <dbReference type="HAMAP-Rule" id="MF_00176"/>
    </source>
</evidence>
<evidence type="ECO:0007829" key="2">
    <source>
        <dbReference type="PDB" id="6HHZ"/>
    </source>
</evidence>
<evidence type="ECO:0007829" key="3">
    <source>
        <dbReference type="PDB" id="6HI0"/>
    </source>
</evidence>
<evidence type="ECO:0007829" key="4">
    <source>
        <dbReference type="PDB" id="6S30"/>
    </source>
</evidence>
<gene>
    <name evidence="1" type="primary">serS</name>
    <name type="ordered locus">KPN78578_09000</name>
    <name type="ORF">KPN_00925</name>
</gene>
<dbReference type="EC" id="6.1.1.11" evidence="1"/>
<dbReference type="EMBL" id="CP000647">
    <property type="protein sequence ID" value="ABR76361.1"/>
    <property type="molecule type" value="Genomic_DNA"/>
</dbReference>
<dbReference type="RefSeq" id="WP_002898139.1">
    <property type="nucleotide sequence ID" value="NC_009648.1"/>
</dbReference>
<dbReference type="PDB" id="6HHY">
    <property type="method" value="X-ray"/>
    <property type="resolution" value="2.27 A"/>
    <property type="chains" value="A=1-430"/>
</dbReference>
<dbReference type="PDB" id="6HHZ">
    <property type="method" value="X-ray"/>
    <property type="resolution" value="2.15 A"/>
    <property type="chains" value="A=1-430"/>
</dbReference>
<dbReference type="PDB" id="6HI0">
    <property type="method" value="X-ray"/>
    <property type="resolution" value="2.25 A"/>
    <property type="chains" value="A=1-430"/>
</dbReference>
<dbReference type="PDB" id="6S30">
    <property type="method" value="X-ray"/>
    <property type="resolution" value="2.41 A"/>
    <property type="chains" value="A=1-430"/>
</dbReference>
<dbReference type="PDB" id="7AP1">
    <property type="method" value="X-ray"/>
    <property type="resolution" value="2.18 A"/>
    <property type="chains" value="A=1-430"/>
</dbReference>
<dbReference type="PDBsum" id="6HHY"/>
<dbReference type="PDBsum" id="6HHZ"/>
<dbReference type="PDBsum" id="6HI0"/>
<dbReference type="PDBsum" id="6S30"/>
<dbReference type="PDBsum" id="7AP1"/>
<dbReference type="SMR" id="A6T6Z0"/>
<dbReference type="STRING" id="272620.KPN_00925"/>
<dbReference type="jPOST" id="A6T6Z0"/>
<dbReference type="PaxDb" id="272620-KPN_00925"/>
<dbReference type="EnsemblBacteria" id="ABR76361">
    <property type="protein sequence ID" value="ABR76361"/>
    <property type="gene ID" value="KPN_00925"/>
</dbReference>
<dbReference type="KEGG" id="kpn:KPN_00925"/>
<dbReference type="HOGENOM" id="CLU_023797_1_1_6"/>
<dbReference type="UniPathway" id="UPA00906">
    <property type="reaction ID" value="UER00895"/>
</dbReference>
<dbReference type="Proteomes" id="UP000000265">
    <property type="component" value="Chromosome"/>
</dbReference>
<dbReference type="GO" id="GO:0005737">
    <property type="term" value="C:cytoplasm"/>
    <property type="evidence" value="ECO:0007669"/>
    <property type="project" value="UniProtKB-SubCell"/>
</dbReference>
<dbReference type="GO" id="GO:0005524">
    <property type="term" value="F:ATP binding"/>
    <property type="evidence" value="ECO:0007669"/>
    <property type="project" value="UniProtKB-UniRule"/>
</dbReference>
<dbReference type="GO" id="GO:0004828">
    <property type="term" value="F:serine-tRNA ligase activity"/>
    <property type="evidence" value="ECO:0007669"/>
    <property type="project" value="UniProtKB-UniRule"/>
</dbReference>
<dbReference type="GO" id="GO:0016260">
    <property type="term" value="P:selenocysteine biosynthetic process"/>
    <property type="evidence" value="ECO:0007669"/>
    <property type="project" value="UniProtKB-UniRule"/>
</dbReference>
<dbReference type="GO" id="GO:0006434">
    <property type="term" value="P:seryl-tRNA aminoacylation"/>
    <property type="evidence" value="ECO:0007669"/>
    <property type="project" value="UniProtKB-UniRule"/>
</dbReference>
<dbReference type="CDD" id="cd00770">
    <property type="entry name" value="SerRS_core"/>
    <property type="match status" value="1"/>
</dbReference>
<dbReference type="FunFam" id="1.10.287.40:FF:000001">
    <property type="entry name" value="Serine--tRNA ligase"/>
    <property type="match status" value="1"/>
</dbReference>
<dbReference type="FunFam" id="3.30.930.10:FF:000018">
    <property type="entry name" value="Serine--tRNA ligase"/>
    <property type="match status" value="1"/>
</dbReference>
<dbReference type="Gene3D" id="3.30.930.10">
    <property type="entry name" value="Bira Bifunctional Protein, Domain 2"/>
    <property type="match status" value="1"/>
</dbReference>
<dbReference type="Gene3D" id="1.10.287.40">
    <property type="entry name" value="Serine-tRNA synthetase, tRNA binding domain"/>
    <property type="match status" value="1"/>
</dbReference>
<dbReference type="HAMAP" id="MF_00176">
    <property type="entry name" value="Ser_tRNA_synth_type1"/>
    <property type="match status" value="1"/>
</dbReference>
<dbReference type="InterPro" id="IPR002314">
    <property type="entry name" value="aa-tRNA-synt_IIb"/>
</dbReference>
<dbReference type="InterPro" id="IPR006195">
    <property type="entry name" value="aa-tRNA-synth_II"/>
</dbReference>
<dbReference type="InterPro" id="IPR045864">
    <property type="entry name" value="aa-tRNA-synth_II/BPL/LPL"/>
</dbReference>
<dbReference type="InterPro" id="IPR002317">
    <property type="entry name" value="Ser-tRNA-ligase_type_1"/>
</dbReference>
<dbReference type="InterPro" id="IPR015866">
    <property type="entry name" value="Ser-tRNA-synth_1_N"/>
</dbReference>
<dbReference type="InterPro" id="IPR042103">
    <property type="entry name" value="SerRS_1_N_sf"/>
</dbReference>
<dbReference type="InterPro" id="IPR033729">
    <property type="entry name" value="SerRS_core"/>
</dbReference>
<dbReference type="InterPro" id="IPR010978">
    <property type="entry name" value="tRNA-bd_arm"/>
</dbReference>
<dbReference type="NCBIfam" id="TIGR00414">
    <property type="entry name" value="serS"/>
    <property type="match status" value="1"/>
</dbReference>
<dbReference type="PANTHER" id="PTHR43697:SF1">
    <property type="entry name" value="SERINE--TRNA LIGASE"/>
    <property type="match status" value="1"/>
</dbReference>
<dbReference type="PANTHER" id="PTHR43697">
    <property type="entry name" value="SERYL-TRNA SYNTHETASE"/>
    <property type="match status" value="1"/>
</dbReference>
<dbReference type="Pfam" id="PF02403">
    <property type="entry name" value="Seryl_tRNA_N"/>
    <property type="match status" value="1"/>
</dbReference>
<dbReference type="Pfam" id="PF00587">
    <property type="entry name" value="tRNA-synt_2b"/>
    <property type="match status" value="1"/>
</dbReference>
<dbReference type="PIRSF" id="PIRSF001529">
    <property type="entry name" value="Ser-tRNA-synth_IIa"/>
    <property type="match status" value="1"/>
</dbReference>
<dbReference type="PRINTS" id="PR00981">
    <property type="entry name" value="TRNASYNTHSER"/>
</dbReference>
<dbReference type="SUPFAM" id="SSF55681">
    <property type="entry name" value="Class II aaRS and biotin synthetases"/>
    <property type="match status" value="1"/>
</dbReference>
<dbReference type="SUPFAM" id="SSF46589">
    <property type="entry name" value="tRNA-binding arm"/>
    <property type="match status" value="1"/>
</dbReference>
<dbReference type="PROSITE" id="PS50862">
    <property type="entry name" value="AA_TRNA_LIGASE_II"/>
    <property type="match status" value="1"/>
</dbReference>
<accession>A6T6Z0</accession>
<organism>
    <name type="scientific">Klebsiella pneumoniae subsp. pneumoniae (strain ATCC 700721 / MGH 78578)</name>
    <dbReference type="NCBI Taxonomy" id="272620"/>
    <lineage>
        <taxon>Bacteria</taxon>
        <taxon>Pseudomonadati</taxon>
        <taxon>Pseudomonadota</taxon>
        <taxon>Gammaproteobacteria</taxon>
        <taxon>Enterobacterales</taxon>
        <taxon>Enterobacteriaceae</taxon>
        <taxon>Klebsiella/Raoultella group</taxon>
        <taxon>Klebsiella</taxon>
        <taxon>Klebsiella pneumoniae complex</taxon>
    </lineage>
</organism>
<keyword id="KW-0002">3D-structure</keyword>
<keyword id="KW-0030">Aminoacyl-tRNA synthetase</keyword>
<keyword id="KW-0067">ATP-binding</keyword>
<keyword id="KW-0963">Cytoplasm</keyword>
<keyword id="KW-0436">Ligase</keyword>
<keyword id="KW-0547">Nucleotide-binding</keyword>
<keyword id="KW-0648">Protein biosynthesis</keyword>
<sequence>MLDPNLLRTEPDAVAEKLARRGFKLDVDKLRALEERRKVLQVQTENLQAERNSRSKSIGQAKARGEDIEPLRLEVNKLGEQLDAAKSELETLLAEIRDIALAIPNIPHDDVPVGRDENDNVEVSRWGTPRQFDFEVRDHVTLGEMHGGLDFAAAVKLTGSRFVVMKGQLARLHRALAQFMLDLHTEQHGYSENYVPYLVNQDTLYGTGQLPKFAGDLFHTRPLEEEADSSNYALIPTAEVPLTNLVRDEIIDEDDLPIKMTAHTPCFRSEAGSYGRDTRGLIRMHQFDKVEMVQIVRPEDSMAALEEMTGHAEKVLQLLGLPYRKVALCTGDMGFSACKTYDLEVWVPAQNTYREISSCSNVWDFQARRMQARCRSKSDKKTRLVHTLNGSGLAVGRTLVALMENYQQADGRIEIPEVLRPYMRGLEYIG</sequence>
<proteinExistence type="evidence at protein level"/>
<feature type="chain" id="PRO_1000019705" description="Serine--tRNA ligase">
    <location>
        <begin position="1"/>
        <end position="430"/>
    </location>
</feature>
<feature type="binding site" evidence="1">
    <location>
        <begin position="237"/>
        <end position="239"/>
    </location>
    <ligand>
        <name>L-serine</name>
        <dbReference type="ChEBI" id="CHEBI:33384"/>
    </ligand>
</feature>
<feature type="binding site" evidence="1">
    <location>
        <begin position="268"/>
        <end position="270"/>
    </location>
    <ligand>
        <name>ATP</name>
        <dbReference type="ChEBI" id="CHEBI:30616"/>
    </ligand>
</feature>
<feature type="binding site" evidence="1">
    <location>
        <position position="291"/>
    </location>
    <ligand>
        <name>L-serine</name>
        <dbReference type="ChEBI" id="CHEBI:33384"/>
    </ligand>
</feature>
<feature type="binding site" evidence="1">
    <location>
        <begin position="355"/>
        <end position="358"/>
    </location>
    <ligand>
        <name>ATP</name>
        <dbReference type="ChEBI" id="CHEBI:30616"/>
    </ligand>
</feature>
<feature type="binding site" evidence="1">
    <location>
        <position position="391"/>
    </location>
    <ligand>
        <name>L-serine</name>
        <dbReference type="ChEBI" id="CHEBI:33384"/>
    </ligand>
</feature>
<feature type="helix" evidence="2">
    <location>
        <begin position="4"/>
        <end position="9"/>
    </location>
</feature>
<feature type="helix" evidence="2">
    <location>
        <begin position="11"/>
        <end position="19"/>
    </location>
</feature>
<feature type="turn" evidence="2">
    <location>
        <begin position="20"/>
        <end position="22"/>
    </location>
</feature>
<feature type="helix" evidence="2">
    <location>
        <begin position="27"/>
        <end position="62"/>
    </location>
</feature>
<feature type="helix" evidence="2">
    <location>
        <begin position="69"/>
        <end position="100"/>
    </location>
</feature>
<feature type="helix" evidence="2">
    <location>
        <begin position="117"/>
        <end position="119"/>
    </location>
</feature>
<feature type="strand" evidence="2">
    <location>
        <begin position="121"/>
        <end position="127"/>
    </location>
</feature>
<feature type="helix" evidence="2">
    <location>
        <begin position="139"/>
        <end position="145"/>
    </location>
</feature>
<feature type="helix" evidence="2">
    <location>
        <begin position="151"/>
        <end position="157"/>
    </location>
</feature>
<feature type="helix" evidence="2">
    <location>
        <begin position="168"/>
        <end position="186"/>
    </location>
</feature>
<feature type="strand" evidence="2">
    <location>
        <begin position="197"/>
        <end position="199"/>
    </location>
</feature>
<feature type="helix" evidence="2">
    <location>
        <begin position="201"/>
        <end position="206"/>
    </location>
</feature>
<feature type="turn" evidence="2">
    <location>
        <begin position="210"/>
        <end position="213"/>
    </location>
</feature>
<feature type="helix" evidence="2">
    <location>
        <begin position="214"/>
        <end position="216"/>
    </location>
</feature>
<feature type="helix" evidence="2">
    <location>
        <begin position="224"/>
        <end position="226"/>
    </location>
</feature>
<feature type="turn" evidence="2">
    <location>
        <begin position="227"/>
        <end position="229"/>
    </location>
</feature>
<feature type="strand" evidence="2">
    <location>
        <begin position="232"/>
        <end position="234"/>
    </location>
</feature>
<feature type="helix" evidence="2">
    <location>
        <begin position="239"/>
        <end position="243"/>
    </location>
</feature>
<feature type="helix" evidence="2">
    <location>
        <begin position="244"/>
        <end position="246"/>
    </location>
</feature>
<feature type="strand" evidence="2">
    <location>
        <begin position="250"/>
        <end position="252"/>
    </location>
</feature>
<feature type="helix" evidence="2">
    <location>
        <begin position="253"/>
        <end position="255"/>
    </location>
</feature>
<feature type="strand" evidence="2">
    <location>
        <begin position="258"/>
        <end position="267"/>
    </location>
</feature>
<feature type="turn" evidence="3">
    <location>
        <begin position="274"/>
        <end position="277"/>
    </location>
</feature>
<feature type="strand" evidence="2">
    <location>
        <begin position="279"/>
        <end position="281"/>
    </location>
</feature>
<feature type="strand" evidence="2">
    <location>
        <begin position="285"/>
        <end position="296"/>
    </location>
</feature>
<feature type="helix" evidence="2">
    <location>
        <begin position="298"/>
        <end position="300"/>
    </location>
</feature>
<feature type="helix" evidence="2">
    <location>
        <begin position="301"/>
        <end position="318"/>
    </location>
</feature>
<feature type="strand" evidence="2">
    <location>
        <begin position="323"/>
        <end position="327"/>
    </location>
</feature>
<feature type="helix" evidence="2">
    <location>
        <begin position="330"/>
        <end position="332"/>
    </location>
</feature>
<feature type="strand" evidence="2">
    <location>
        <begin position="338"/>
        <end position="347"/>
    </location>
</feature>
<feature type="turn" evidence="2">
    <location>
        <begin position="348"/>
        <end position="351"/>
    </location>
</feature>
<feature type="strand" evidence="2">
    <location>
        <begin position="352"/>
        <end position="363"/>
    </location>
</feature>
<feature type="helix" evidence="2">
    <location>
        <begin position="365"/>
        <end position="370"/>
    </location>
</feature>
<feature type="strand" evidence="2">
    <location>
        <begin position="373"/>
        <end position="375"/>
    </location>
</feature>
<feature type="strand" evidence="4">
    <location>
        <begin position="382"/>
        <end position="384"/>
    </location>
</feature>
<feature type="strand" evidence="2">
    <location>
        <begin position="386"/>
        <end position="394"/>
    </location>
</feature>
<feature type="helix" evidence="2">
    <location>
        <begin position="395"/>
        <end position="405"/>
    </location>
</feature>
<feature type="helix" evidence="2">
    <location>
        <begin position="417"/>
        <end position="423"/>
    </location>
</feature>
<comment type="function">
    <text evidence="1">Catalyzes the attachment of serine to tRNA(Ser). Is also able to aminoacylate tRNA(Sec) with serine, to form the misacylated tRNA L-seryl-tRNA(Sec), which will be further converted into selenocysteinyl-tRNA(Sec).</text>
</comment>
<comment type="catalytic activity">
    <reaction evidence="1">
        <text>tRNA(Ser) + L-serine + ATP = L-seryl-tRNA(Ser) + AMP + diphosphate + H(+)</text>
        <dbReference type="Rhea" id="RHEA:12292"/>
        <dbReference type="Rhea" id="RHEA-COMP:9669"/>
        <dbReference type="Rhea" id="RHEA-COMP:9703"/>
        <dbReference type="ChEBI" id="CHEBI:15378"/>
        <dbReference type="ChEBI" id="CHEBI:30616"/>
        <dbReference type="ChEBI" id="CHEBI:33019"/>
        <dbReference type="ChEBI" id="CHEBI:33384"/>
        <dbReference type="ChEBI" id="CHEBI:78442"/>
        <dbReference type="ChEBI" id="CHEBI:78533"/>
        <dbReference type="ChEBI" id="CHEBI:456215"/>
        <dbReference type="EC" id="6.1.1.11"/>
    </reaction>
</comment>
<comment type="catalytic activity">
    <reaction evidence="1">
        <text>tRNA(Sec) + L-serine + ATP = L-seryl-tRNA(Sec) + AMP + diphosphate + H(+)</text>
        <dbReference type="Rhea" id="RHEA:42580"/>
        <dbReference type="Rhea" id="RHEA-COMP:9742"/>
        <dbReference type="Rhea" id="RHEA-COMP:10128"/>
        <dbReference type="ChEBI" id="CHEBI:15378"/>
        <dbReference type="ChEBI" id="CHEBI:30616"/>
        <dbReference type="ChEBI" id="CHEBI:33019"/>
        <dbReference type="ChEBI" id="CHEBI:33384"/>
        <dbReference type="ChEBI" id="CHEBI:78442"/>
        <dbReference type="ChEBI" id="CHEBI:78533"/>
        <dbReference type="ChEBI" id="CHEBI:456215"/>
        <dbReference type="EC" id="6.1.1.11"/>
    </reaction>
</comment>
<comment type="pathway">
    <text evidence="1">Aminoacyl-tRNA biosynthesis; selenocysteinyl-tRNA(Sec) biosynthesis; L-seryl-tRNA(Sec) from L-serine and tRNA(Sec): step 1/1.</text>
</comment>
<comment type="subunit">
    <text evidence="1">Homodimer. The tRNA molecule binds across the dimer.</text>
</comment>
<comment type="subcellular location">
    <subcellularLocation>
        <location evidence="1">Cytoplasm</location>
    </subcellularLocation>
</comment>
<comment type="domain">
    <text evidence="1">Consists of two distinct domains, a catalytic core and a N-terminal extension that is involved in tRNA binding.</text>
</comment>
<comment type="similarity">
    <text evidence="1">Belongs to the class-II aminoacyl-tRNA synthetase family. Type-1 seryl-tRNA synthetase subfamily.</text>
</comment>
<reference key="1">
    <citation type="submission" date="2006-09" db="EMBL/GenBank/DDBJ databases">
        <authorList>
            <consortium name="The Klebsiella pneumonia Genome Sequencing Project"/>
            <person name="McClelland M."/>
            <person name="Sanderson E.K."/>
            <person name="Spieth J."/>
            <person name="Clifton W.S."/>
            <person name="Latreille P."/>
            <person name="Sabo A."/>
            <person name="Pepin K."/>
            <person name="Bhonagiri V."/>
            <person name="Porwollik S."/>
            <person name="Ali J."/>
            <person name="Wilson R.K."/>
        </authorList>
    </citation>
    <scope>NUCLEOTIDE SEQUENCE [LARGE SCALE GENOMIC DNA]</scope>
    <source>
        <strain>ATCC 700721 / MGH 78578</strain>
    </source>
</reference>
<name>SYS_KLEP7</name>
<protein>
    <recommendedName>
        <fullName evidence="1">Serine--tRNA ligase</fullName>
        <ecNumber evidence="1">6.1.1.11</ecNumber>
    </recommendedName>
    <alternativeName>
        <fullName evidence="1">Seryl-tRNA synthetase</fullName>
        <shortName evidence="1">SerRS</shortName>
    </alternativeName>
    <alternativeName>
        <fullName evidence="1">Seryl-tRNA(Ser/Sec) synthetase</fullName>
    </alternativeName>
</protein>